<feature type="chain" id="PRO_1000068167" description="Large ribosomal subunit protein uL23">
    <location>
        <begin position="1"/>
        <end position="98"/>
    </location>
</feature>
<organism>
    <name type="scientific">Streptococcus pyogenes serotype M12 (strain MGAS9429)</name>
    <dbReference type="NCBI Taxonomy" id="370551"/>
    <lineage>
        <taxon>Bacteria</taxon>
        <taxon>Bacillati</taxon>
        <taxon>Bacillota</taxon>
        <taxon>Bacilli</taxon>
        <taxon>Lactobacillales</taxon>
        <taxon>Streptococcaceae</taxon>
        <taxon>Streptococcus</taxon>
    </lineage>
</organism>
<name>RL23_STRPC</name>
<accession>Q1JP15</accession>
<protein>
    <recommendedName>
        <fullName evidence="1">Large ribosomal subunit protein uL23</fullName>
    </recommendedName>
    <alternativeName>
        <fullName evidence="2">50S ribosomal protein L23</fullName>
    </alternativeName>
</protein>
<evidence type="ECO:0000255" key="1">
    <source>
        <dbReference type="HAMAP-Rule" id="MF_01369"/>
    </source>
</evidence>
<evidence type="ECO:0000305" key="2"/>
<keyword id="KW-0687">Ribonucleoprotein</keyword>
<keyword id="KW-0689">Ribosomal protein</keyword>
<keyword id="KW-0694">RNA-binding</keyword>
<keyword id="KW-0699">rRNA-binding</keyword>
<dbReference type="EMBL" id="CP000259">
    <property type="protein sequence ID" value="ABF31234.1"/>
    <property type="molecule type" value="Genomic_DNA"/>
</dbReference>
<dbReference type="RefSeq" id="WP_002986656.1">
    <property type="nucleotide sequence ID" value="NC_008021.1"/>
</dbReference>
<dbReference type="SMR" id="Q1JP15"/>
<dbReference type="KEGG" id="spk:MGAS9429_Spy0046"/>
<dbReference type="HOGENOM" id="CLU_037562_3_2_9"/>
<dbReference type="Proteomes" id="UP000002433">
    <property type="component" value="Chromosome"/>
</dbReference>
<dbReference type="GO" id="GO:1990904">
    <property type="term" value="C:ribonucleoprotein complex"/>
    <property type="evidence" value="ECO:0007669"/>
    <property type="project" value="UniProtKB-KW"/>
</dbReference>
<dbReference type="GO" id="GO:0005840">
    <property type="term" value="C:ribosome"/>
    <property type="evidence" value="ECO:0007669"/>
    <property type="project" value="UniProtKB-KW"/>
</dbReference>
<dbReference type="GO" id="GO:0019843">
    <property type="term" value="F:rRNA binding"/>
    <property type="evidence" value="ECO:0007669"/>
    <property type="project" value="UniProtKB-UniRule"/>
</dbReference>
<dbReference type="GO" id="GO:0003735">
    <property type="term" value="F:structural constituent of ribosome"/>
    <property type="evidence" value="ECO:0007669"/>
    <property type="project" value="InterPro"/>
</dbReference>
<dbReference type="GO" id="GO:0006412">
    <property type="term" value="P:translation"/>
    <property type="evidence" value="ECO:0007669"/>
    <property type="project" value="UniProtKB-UniRule"/>
</dbReference>
<dbReference type="FunFam" id="3.30.70.330:FF:000001">
    <property type="entry name" value="50S ribosomal protein L23"/>
    <property type="match status" value="1"/>
</dbReference>
<dbReference type="Gene3D" id="3.30.70.330">
    <property type="match status" value="1"/>
</dbReference>
<dbReference type="HAMAP" id="MF_01369_B">
    <property type="entry name" value="Ribosomal_uL23_B"/>
    <property type="match status" value="1"/>
</dbReference>
<dbReference type="InterPro" id="IPR012677">
    <property type="entry name" value="Nucleotide-bd_a/b_plait_sf"/>
</dbReference>
<dbReference type="InterPro" id="IPR013025">
    <property type="entry name" value="Ribosomal_uL23-like"/>
</dbReference>
<dbReference type="InterPro" id="IPR012678">
    <property type="entry name" value="Ribosomal_uL23/eL15/eS24_sf"/>
</dbReference>
<dbReference type="InterPro" id="IPR001014">
    <property type="entry name" value="Ribosomal_uL23_CS"/>
</dbReference>
<dbReference type="NCBIfam" id="NF004361">
    <property type="entry name" value="PRK05738.2-1"/>
    <property type="match status" value="1"/>
</dbReference>
<dbReference type="NCBIfam" id="NF004363">
    <property type="entry name" value="PRK05738.2-4"/>
    <property type="match status" value="1"/>
</dbReference>
<dbReference type="PANTHER" id="PTHR11620">
    <property type="entry name" value="60S RIBOSOMAL PROTEIN L23A"/>
    <property type="match status" value="1"/>
</dbReference>
<dbReference type="Pfam" id="PF00276">
    <property type="entry name" value="Ribosomal_L23"/>
    <property type="match status" value="1"/>
</dbReference>
<dbReference type="SUPFAM" id="SSF54189">
    <property type="entry name" value="Ribosomal proteins S24e, L23 and L15e"/>
    <property type="match status" value="1"/>
</dbReference>
<dbReference type="PROSITE" id="PS00050">
    <property type="entry name" value="RIBOSOMAL_L23"/>
    <property type="match status" value="1"/>
</dbReference>
<sequence length="98" mass="10732">MNLYDVIKKPVITEKSMIALEAGKYTFEVDTRAHKLLIKQAVEAAFDGVKVASVNTVNVKPKAKRVGRYTGFTSKTKKAIITLTADSKAIELFAAEAE</sequence>
<comment type="function">
    <text evidence="1">One of the early assembly proteins it binds 23S rRNA. One of the proteins that surrounds the polypeptide exit tunnel on the outside of the ribosome. Forms the main docking site for trigger factor binding to the ribosome.</text>
</comment>
<comment type="subunit">
    <text evidence="1">Part of the 50S ribosomal subunit. Contacts protein L29, and trigger factor when it is bound to the ribosome.</text>
</comment>
<comment type="similarity">
    <text evidence="1">Belongs to the universal ribosomal protein uL23 family.</text>
</comment>
<gene>
    <name evidence="1" type="primary">rplW</name>
    <name type="ordered locus">MGAS9429_Spy0046</name>
</gene>
<reference key="1">
    <citation type="journal article" date="2006" name="Proc. Natl. Acad. Sci. U.S.A.">
        <title>Molecular genetic anatomy of inter- and intraserotype variation in the human bacterial pathogen group A Streptococcus.</title>
        <authorList>
            <person name="Beres S.B."/>
            <person name="Richter E.W."/>
            <person name="Nagiec M.J."/>
            <person name="Sumby P."/>
            <person name="Porcella S.F."/>
            <person name="DeLeo F.R."/>
            <person name="Musser J.M."/>
        </authorList>
    </citation>
    <scope>NUCLEOTIDE SEQUENCE [LARGE SCALE GENOMIC DNA]</scope>
    <source>
        <strain>MGAS9429</strain>
    </source>
</reference>
<proteinExistence type="inferred from homology"/>